<reference key="1">
    <citation type="journal article" date="1982" name="Hoppe-Seyler's Z. Physiol. Chem.">
        <title>Hemoglobins, XLV. The amino acid sequence of pheasant (Phasianus colchicus colchicus) hemoglobins.</title>
        <authorList>
            <person name="Braunitzer G."/>
            <person name="Godovac J."/>
        </authorList>
    </citation>
    <scope>PROTEIN SEQUENCE</scope>
</reference>
<accession>P02113</accession>
<dbReference type="PIR" id="A02433">
    <property type="entry name" value="HBFER"/>
</dbReference>
<dbReference type="SMR" id="P02113"/>
<dbReference type="GO" id="GO:0072562">
    <property type="term" value="C:blood microparticle"/>
    <property type="evidence" value="ECO:0007669"/>
    <property type="project" value="TreeGrafter"/>
</dbReference>
<dbReference type="GO" id="GO:0031838">
    <property type="term" value="C:haptoglobin-hemoglobin complex"/>
    <property type="evidence" value="ECO:0007669"/>
    <property type="project" value="TreeGrafter"/>
</dbReference>
<dbReference type="GO" id="GO:0005833">
    <property type="term" value="C:hemoglobin complex"/>
    <property type="evidence" value="ECO:0007669"/>
    <property type="project" value="InterPro"/>
</dbReference>
<dbReference type="GO" id="GO:0031720">
    <property type="term" value="F:haptoglobin binding"/>
    <property type="evidence" value="ECO:0007669"/>
    <property type="project" value="TreeGrafter"/>
</dbReference>
<dbReference type="GO" id="GO:0020037">
    <property type="term" value="F:heme binding"/>
    <property type="evidence" value="ECO:0007669"/>
    <property type="project" value="InterPro"/>
</dbReference>
<dbReference type="GO" id="GO:0046872">
    <property type="term" value="F:metal ion binding"/>
    <property type="evidence" value="ECO:0007669"/>
    <property type="project" value="UniProtKB-KW"/>
</dbReference>
<dbReference type="GO" id="GO:0043177">
    <property type="term" value="F:organic acid binding"/>
    <property type="evidence" value="ECO:0007669"/>
    <property type="project" value="TreeGrafter"/>
</dbReference>
<dbReference type="GO" id="GO:0019825">
    <property type="term" value="F:oxygen binding"/>
    <property type="evidence" value="ECO:0007669"/>
    <property type="project" value="InterPro"/>
</dbReference>
<dbReference type="GO" id="GO:0005344">
    <property type="term" value="F:oxygen carrier activity"/>
    <property type="evidence" value="ECO:0007669"/>
    <property type="project" value="UniProtKB-KW"/>
</dbReference>
<dbReference type="GO" id="GO:0004601">
    <property type="term" value="F:peroxidase activity"/>
    <property type="evidence" value="ECO:0007669"/>
    <property type="project" value="TreeGrafter"/>
</dbReference>
<dbReference type="GO" id="GO:0042744">
    <property type="term" value="P:hydrogen peroxide catabolic process"/>
    <property type="evidence" value="ECO:0007669"/>
    <property type="project" value="TreeGrafter"/>
</dbReference>
<dbReference type="CDD" id="cd08925">
    <property type="entry name" value="Hb-beta-like"/>
    <property type="match status" value="1"/>
</dbReference>
<dbReference type="FunFam" id="1.10.490.10:FF:000001">
    <property type="entry name" value="Hemoglobin subunit beta"/>
    <property type="match status" value="1"/>
</dbReference>
<dbReference type="Gene3D" id="1.10.490.10">
    <property type="entry name" value="Globins"/>
    <property type="match status" value="1"/>
</dbReference>
<dbReference type="InterPro" id="IPR000971">
    <property type="entry name" value="Globin"/>
</dbReference>
<dbReference type="InterPro" id="IPR009050">
    <property type="entry name" value="Globin-like_sf"/>
</dbReference>
<dbReference type="InterPro" id="IPR012292">
    <property type="entry name" value="Globin/Proto"/>
</dbReference>
<dbReference type="InterPro" id="IPR002337">
    <property type="entry name" value="Hemoglobin_b"/>
</dbReference>
<dbReference type="InterPro" id="IPR050056">
    <property type="entry name" value="Hemoglobin_oxygen_transport"/>
</dbReference>
<dbReference type="PANTHER" id="PTHR11442">
    <property type="entry name" value="HEMOGLOBIN FAMILY MEMBER"/>
    <property type="match status" value="1"/>
</dbReference>
<dbReference type="PANTHER" id="PTHR11442:SF7">
    <property type="entry name" value="HEMOGLOBIN SUBUNIT EPSILON"/>
    <property type="match status" value="1"/>
</dbReference>
<dbReference type="Pfam" id="PF00042">
    <property type="entry name" value="Globin"/>
    <property type="match status" value="1"/>
</dbReference>
<dbReference type="PRINTS" id="PR00814">
    <property type="entry name" value="BETAHAEM"/>
</dbReference>
<dbReference type="SUPFAM" id="SSF46458">
    <property type="entry name" value="Globin-like"/>
    <property type="match status" value="1"/>
</dbReference>
<dbReference type="PROSITE" id="PS01033">
    <property type="entry name" value="GLOBIN"/>
    <property type="match status" value="1"/>
</dbReference>
<feature type="chain" id="PRO_0000053067" description="Hemoglobin subunit beta">
    <location>
        <begin position="1"/>
        <end position="146"/>
    </location>
</feature>
<feature type="domain" description="Globin" evidence="1">
    <location>
        <begin position="2"/>
        <end position="146"/>
    </location>
</feature>
<feature type="binding site" description="distal binding residue">
    <location>
        <position position="63"/>
    </location>
    <ligand>
        <name>heme b</name>
        <dbReference type="ChEBI" id="CHEBI:60344"/>
    </ligand>
    <ligandPart>
        <name>Fe</name>
        <dbReference type="ChEBI" id="CHEBI:18248"/>
    </ligandPart>
</feature>
<feature type="binding site" description="proximal binding residue">
    <location>
        <position position="92"/>
    </location>
    <ligand>
        <name>heme b</name>
        <dbReference type="ChEBI" id="CHEBI:60344"/>
    </ligand>
    <ligandPart>
        <name>Fe</name>
        <dbReference type="ChEBI" id="CHEBI:18248"/>
    </ligandPart>
</feature>
<protein>
    <recommendedName>
        <fullName>Hemoglobin subunit beta</fullName>
    </recommendedName>
    <alternativeName>
        <fullName>Beta-globin</fullName>
    </alternativeName>
    <alternativeName>
        <fullName>Hemoglobin beta chain</fullName>
    </alternativeName>
</protein>
<evidence type="ECO:0000255" key="1">
    <source>
        <dbReference type="PROSITE-ProRule" id="PRU00238"/>
    </source>
</evidence>
<sequence>VHWSAEEKQLITGLWGKVNVADCGAEALARLLIVYPWTQRFFASFGNLSSPTAILGNPMVRAHGKKVLTSFGDAVKNLDNIKNTFSQLSELHCDKLHVDPENFRLLGDILIIVLAAHFSKDFTPECQAAWQKLVRVVAHALARKYH</sequence>
<organism>
    <name type="scientific">Phasianus colchicus colchicus</name>
    <name type="common">Black-necked pheasant</name>
    <dbReference type="NCBI Taxonomy" id="9057"/>
    <lineage>
        <taxon>Eukaryota</taxon>
        <taxon>Metazoa</taxon>
        <taxon>Chordata</taxon>
        <taxon>Craniata</taxon>
        <taxon>Vertebrata</taxon>
        <taxon>Euteleostomi</taxon>
        <taxon>Archelosauria</taxon>
        <taxon>Archosauria</taxon>
        <taxon>Dinosauria</taxon>
        <taxon>Saurischia</taxon>
        <taxon>Theropoda</taxon>
        <taxon>Coelurosauria</taxon>
        <taxon>Aves</taxon>
        <taxon>Neognathae</taxon>
        <taxon>Galloanserae</taxon>
        <taxon>Galliformes</taxon>
        <taxon>Phasianidae</taxon>
        <taxon>Phasianinae</taxon>
        <taxon>Phasianus</taxon>
    </lineage>
</organism>
<proteinExistence type="evidence at protein level"/>
<comment type="function">
    <text>Involved in oxygen transport from the lung to the various peripheral tissues.</text>
</comment>
<comment type="subunit">
    <text>Heterotetramer of two alpha chains and two beta chains.</text>
</comment>
<comment type="tissue specificity">
    <text>Red blood cells.</text>
</comment>
<comment type="similarity">
    <text evidence="1">Belongs to the globin family.</text>
</comment>
<gene>
    <name type="primary">HBB</name>
</gene>
<keyword id="KW-0903">Direct protein sequencing</keyword>
<keyword id="KW-0349">Heme</keyword>
<keyword id="KW-0408">Iron</keyword>
<keyword id="KW-0479">Metal-binding</keyword>
<keyword id="KW-0561">Oxygen transport</keyword>
<keyword id="KW-0813">Transport</keyword>
<name>HBB_PHACO</name>